<dbReference type="EMBL" id="CP001083">
    <property type="protein sequence ID" value="ACQ54242.1"/>
    <property type="molecule type" value="Genomic_DNA"/>
</dbReference>
<dbReference type="RefSeq" id="WP_003360094.1">
    <property type="nucleotide sequence ID" value="NC_012658.1"/>
</dbReference>
<dbReference type="SMR" id="C3KTD3"/>
<dbReference type="KEGG" id="cbi:CLJ_B3336"/>
<dbReference type="HOGENOM" id="CLU_087936_3_0_9"/>
<dbReference type="Proteomes" id="UP000002333">
    <property type="component" value="Chromosome"/>
</dbReference>
<dbReference type="GO" id="GO:0005737">
    <property type="term" value="C:cytoplasm"/>
    <property type="evidence" value="ECO:0007669"/>
    <property type="project" value="UniProtKB-SubCell"/>
</dbReference>
<dbReference type="GO" id="GO:0009379">
    <property type="term" value="C:Holliday junction helicase complex"/>
    <property type="evidence" value="ECO:0007669"/>
    <property type="project" value="InterPro"/>
</dbReference>
<dbReference type="GO" id="GO:0048476">
    <property type="term" value="C:Holliday junction resolvase complex"/>
    <property type="evidence" value="ECO:0007669"/>
    <property type="project" value="UniProtKB-UniRule"/>
</dbReference>
<dbReference type="GO" id="GO:0005524">
    <property type="term" value="F:ATP binding"/>
    <property type="evidence" value="ECO:0007669"/>
    <property type="project" value="InterPro"/>
</dbReference>
<dbReference type="GO" id="GO:0000400">
    <property type="term" value="F:four-way junction DNA binding"/>
    <property type="evidence" value="ECO:0007669"/>
    <property type="project" value="UniProtKB-UniRule"/>
</dbReference>
<dbReference type="GO" id="GO:0009378">
    <property type="term" value="F:four-way junction helicase activity"/>
    <property type="evidence" value="ECO:0007669"/>
    <property type="project" value="InterPro"/>
</dbReference>
<dbReference type="GO" id="GO:0006310">
    <property type="term" value="P:DNA recombination"/>
    <property type="evidence" value="ECO:0007669"/>
    <property type="project" value="UniProtKB-UniRule"/>
</dbReference>
<dbReference type="GO" id="GO:0006281">
    <property type="term" value="P:DNA repair"/>
    <property type="evidence" value="ECO:0007669"/>
    <property type="project" value="UniProtKB-UniRule"/>
</dbReference>
<dbReference type="CDD" id="cd14332">
    <property type="entry name" value="UBA_RuvA_C"/>
    <property type="match status" value="1"/>
</dbReference>
<dbReference type="Gene3D" id="1.10.150.20">
    <property type="entry name" value="5' to 3' exonuclease, C-terminal subdomain"/>
    <property type="match status" value="1"/>
</dbReference>
<dbReference type="Gene3D" id="1.10.8.10">
    <property type="entry name" value="DNA helicase RuvA subunit, C-terminal domain"/>
    <property type="match status" value="1"/>
</dbReference>
<dbReference type="Gene3D" id="2.40.50.140">
    <property type="entry name" value="Nucleic acid-binding proteins"/>
    <property type="match status" value="1"/>
</dbReference>
<dbReference type="HAMAP" id="MF_00031">
    <property type="entry name" value="DNA_HJ_migration_RuvA"/>
    <property type="match status" value="1"/>
</dbReference>
<dbReference type="InterPro" id="IPR013849">
    <property type="entry name" value="DNA_helicase_Holl-junc_RuvA_I"/>
</dbReference>
<dbReference type="InterPro" id="IPR003583">
    <property type="entry name" value="Hlx-hairpin-Hlx_DNA-bd_motif"/>
</dbReference>
<dbReference type="InterPro" id="IPR012340">
    <property type="entry name" value="NA-bd_OB-fold"/>
</dbReference>
<dbReference type="InterPro" id="IPR000085">
    <property type="entry name" value="RuvA"/>
</dbReference>
<dbReference type="InterPro" id="IPR010994">
    <property type="entry name" value="RuvA_2-like"/>
</dbReference>
<dbReference type="InterPro" id="IPR011114">
    <property type="entry name" value="RuvA_C"/>
</dbReference>
<dbReference type="InterPro" id="IPR036267">
    <property type="entry name" value="RuvA_C_sf"/>
</dbReference>
<dbReference type="NCBIfam" id="TIGR00084">
    <property type="entry name" value="ruvA"/>
    <property type="match status" value="1"/>
</dbReference>
<dbReference type="Pfam" id="PF14520">
    <property type="entry name" value="HHH_5"/>
    <property type="match status" value="1"/>
</dbReference>
<dbReference type="Pfam" id="PF07499">
    <property type="entry name" value="RuvA_C"/>
    <property type="match status" value="1"/>
</dbReference>
<dbReference type="Pfam" id="PF01330">
    <property type="entry name" value="RuvA_N"/>
    <property type="match status" value="1"/>
</dbReference>
<dbReference type="SMART" id="SM00278">
    <property type="entry name" value="HhH1"/>
    <property type="match status" value="2"/>
</dbReference>
<dbReference type="SUPFAM" id="SSF46929">
    <property type="entry name" value="DNA helicase RuvA subunit, C-terminal domain"/>
    <property type="match status" value="1"/>
</dbReference>
<dbReference type="SUPFAM" id="SSF50249">
    <property type="entry name" value="Nucleic acid-binding proteins"/>
    <property type="match status" value="1"/>
</dbReference>
<dbReference type="SUPFAM" id="SSF47781">
    <property type="entry name" value="RuvA domain 2-like"/>
    <property type="match status" value="1"/>
</dbReference>
<evidence type="ECO:0000255" key="1">
    <source>
        <dbReference type="HAMAP-Rule" id="MF_00031"/>
    </source>
</evidence>
<gene>
    <name evidence="1" type="primary">ruvA</name>
    <name type="ordered locus">CLJ_B3336</name>
</gene>
<keyword id="KW-0963">Cytoplasm</keyword>
<keyword id="KW-0227">DNA damage</keyword>
<keyword id="KW-0233">DNA recombination</keyword>
<keyword id="KW-0234">DNA repair</keyword>
<keyword id="KW-0238">DNA-binding</keyword>
<feature type="chain" id="PRO_1000201983" description="Holliday junction branch migration complex subunit RuvA">
    <location>
        <begin position="1"/>
        <end position="197"/>
    </location>
</feature>
<feature type="region of interest" description="Domain I" evidence="1">
    <location>
        <begin position="1"/>
        <end position="64"/>
    </location>
</feature>
<feature type="region of interest" description="Domain II" evidence="1">
    <location>
        <begin position="65"/>
        <end position="143"/>
    </location>
</feature>
<feature type="region of interest" description="Flexible linker" evidence="1">
    <location>
        <begin position="144"/>
        <end position="148"/>
    </location>
</feature>
<feature type="region of interest" description="Domain III" evidence="1">
    <location>
        <begin position="149"/>
        <end position="197"/>
    </location>
</feature>
<organism>
    <name type="scientific">Clostridium botulinum (strain 657 / Type Ba4)</name>
    <dbReference type="NCBI Taxonomy" id="515621"/>
    <lineage>
        <taxon>Bacteria</taxon>
        <taxon>Bacillati</taxon>
        <taxon>Bacillota</taxon>
        <taxon>Clostridia</taxon>
        <taxon>Eubacteriales</taxon>
        <taxon>Clostridiaceae</taxon>
        <taxon>Clostridium</taxon>
    </lineage>
</organism>
<proteinExistence type="inferred from homology"/>
<reference key="1">
    <citation type="submission" date="2008-05" db="EMBL/GenBank/DDBJ databases">
        <title>Genome sequence of Clostridium botulinum Ba4 strain 657.</title>
        <authorList>
            <person name="Shrivastava S."/>
            <person name="Brown J.L."/>
            <person name="Bruce D."/>
            <person name="Detter C."/>
            <person name="Munk C."/>
            <person name="Smith L.A."/>
            <person name="Smith T.J."/>
            <person name="Sutton G."/>
            <person name="Brettin T.S."/>
        </authorList>
    </citation>
    <scope>NUCLEOTIDE SEQUENCE [LARGE SCALE GENOMIC DNA]</scope>
    <source>
        <strain>657 / Type Ba4</strain>
    </source>
</reference>
<accession>C3KTD3</accession>
<sequence length="197" mass="22215">MYEYIKGKYIDMYKDYIVIENNNIGYKIYTSGSTMAKLPSIGENIMLYTEQIVREDFIGVYGFLTKDELSMFKLLLTINGVGAKAALSLLSISNVSTLKYAIKMGDEKTITRAPGIGKKTAQRIILELKDKIEIDILEEDDEQTINKVTDDKKVLEAVAALITLGYSEKEANKVINSCDKNNSLEQIIKEALKYLMK</sequence>
<name>RUVA_CLOB6</name>
<protein>
    <recommendedName>
        <fullName evidence="1">Holliday junction branch migration complex subunit RuvA</fullName>
    </recommendedName>
</protein>
<comment type="function">
    <text evidence="1">The RuvA-RuvB-RuvC complex processes Holliday junction (HJ) DNA during genetic recombination and DNA repair, while the RuvA-RuvB complex plays an important role in the rescue of blocked DNA replication forks via replication fork reversal (RFR). RuvA specifically binds to HJ cruciform DNA, conferring on it an open structure. The RuvB hexamer acts as an ATP-dependent pump, pulling dsDNA into and through the RuvAB complex. HJ branch migration allows RuvC to scan DNA until it finds its consensus sequence, where it cleaves and resolves the cruciform DNA.</text>
</comment>
<comment type="subunit">
    <text evidence="1">Homotetramer. Forms an RuvA(8)-RuvB(12)-Holliday junction (HJ) complex. HJ DNA is sandwiched between 2 RuvA tetramers; dsDNA enters through RuvA and exits via RuvB. An RuvB hexamer assembles on each DNA strand where it exits the tetramer. Each RuvB hexamer is contacted by two RuvA subunits (via domain III) on 2 adjacent RuvB subunits; this complex drives branch migration. In the full resolvosome a probable DNA-RuvA(4)-RuvB(12)-RuvC(2) complex forms which resolves the HJ.</text>
</comment>
<comment type="subcellular location">
    <subcellularLocation>
        <location evidence="1">Cytoplasm</location>
    </subcellularLocation>
</comment>
<comment type="domain">
    <text evidence="1">Has three domains with a flexible linker between the domains II and III and assumes an 'L' shape. Domain III is highly mobile and contacts RuvB.</text>
</comment>
<comment type="similarity">
    <text evidence="1">Belongs to the RuvA family.</text>
</comment>